<name>FABZ_SINFN</name>
<feature type="chain" id="PRO_1000134706" description="3-hydroxyacyl-[acyl-carrier-protein] dehydratase FabZ">
    <location>
        <begin position="1"/>
        <end position="154"/>
    </location>
</feature>
<feature type="active site" evidence="1">
    <location>
        <position position="57"/>
    </location>
</feature>
<evidence type="ECO:0000255" key="1">
    <source>
        <dbReference type="HAMAP-Rule" id="MF_00406"/>
    </source>
</evidence>
<proteinExistence type="inferred from homology"/>
<dbReference type="EC" id="4.2.1.59" evidence="1"/>
<dbReference type="EMBL" id="CP001389">
    <property type="protein sequence ID" value="ACP25123.1"/>
    <property type="molecule type" value="Genomic_DNA"/>
</dbReference>
<dbReference type="RefSeq" id="WP_012707899.1">
    <property type="nucleotide sequence ID" value="NC_012587.1"/>
</dbReference>
<dbReference type="RefSeq" id="YP_002825876.1">
    <property type="nucleotide sequence ID" value="NC_012587.1"/>
</dbReference>
<dbReference type="SMR" id="C3MBR1"/>
<dbReference type="STRING" id="394.NGR_c13430"/>
<dbReference type="GeneID" id="48972834"/>
<dbReference type="KEGG" id="rhi:NGR_c13430"/>
<dbReference type="PATRIC" id="fig|394.7.peg.4164"/>
<dbReference type="eggNOG" id="COG0764">
    <property type="taxonomic scope" value="Bacteria"/>
</dbReference>
<dbReference type="HOGENOM" id="CLU_078912_1_2_5"/>
<dbReference type="OrthoDB" id="9772788at2"/>
<dbReference type="Proteomes" id="UP000001054">
    <property type="component" value="Chromosome"/>
</dbReference>
<dbReference type="GO" id="GO:0005737">
    <property type="term" value="C:cytoplasm"/>
    <property type="evidence" value="ECO:0007669"/>
    <property type="project" value="UniProtKB-SubCell"/>
</dbReference>
<dbReference type="GO" id="GO:0016020">
    <property type="term" value="C:membrane"/>
    <property type="evidence" value="ECO:0007669"/>
    <property type="project" value="GOC"/>
</dbReference>
<dbReference type="GO" id="GO:0019171">
    <property type="term" value="F:(3R)-hydroxyacyl-[acyl-carrier-protein] dehydratase activity"/>
    <property type="evidence" value="ECO:0007669"/>
    <property type="project" value="UniProtKB-EC"/>
</dbReference>
<dbReference type="GO" id="GO:0006633">
    <property type="term" value="P:fatty acid biosynthetic process"/>
    <property type="evidence" value="ECO:0007669"/>
    <property type="project" value="UniProtKB-UniRule"/>
</dbReference>
<dbReference type="GO" id="GO:0009245">
    <property type="term" value="P:lipid A biosynthetic process"/>
    <property type="evidence" value="ECO:0007669"/>
    <property type="project" value="UniProtKB-UniRule"/>
</dbReference>
<dbReference type="CDD" id="cd01288">
    <property type="entry name" value="FabZ"/>
    <property type="match status" value="1"/>
</dbReference>
<dbReference type="FunFam" id="3.10.129.10:FF:000001">
    <property type="entry name" value="3-hydroxyacyl-[acyl-carrier-protein] dehydratase FabZ"/>
    <property type="match status" value="1"/>
</dbReference>
<dbReference type="Gene3D" id="3.10.129.10">
    <property type="entry name" value="Hotdog Thioesterase"/>
    <property type="match status" value="1"/>
</dbReference>
<dbReference type="HAMAP" id="MF_00406">
    <property type="entry name" value="FabZ"/>
    <property type="match status" value="1"/>
</dbReference>
<dbReference type="InterPro" id="IPR013114">
    <property type="entry name" value="FabA_FabZ"/>
</dbReference>
<dbReference type="InterPro" id="IPR010084">
    <property type="entry name" value="FabZ"/>
</dbReference>
<dbReference type="InterPro" id="IPR029069">
    <property type="entry name" value="HotDog_dom_sf"/>
</dbReference>
<dbReference type="NCBIfam" id="TIGR01750">
    <property type="entry name" value="fabZ"/>
    <property type="match status" value="1"/>
</dbReference>
<dbReference type="NCBIfam" id="NF000582">
    <property type="entry name" value="PRK00006.1"/>
    <property type="match status" value="1"/>
</dbReference>
<dbReference type="PANTHER" id="PTHR30272">
    <property type="entry name" value="3-HYDROXYACYL-[ACYL-CARRIER-PROTEIN] DEHYDRATASE"/>
    <property type="match status" value="1"/>
</dbReference>
<dbReference type="PANTHER" id="PTHR30272:SF1">
    <property type="entry name" value="3-HYDROXYACYL-[ACYL-CARRIER-PROTEIN] DEHYDRATASE"/>
    <property type="match status" value="1"/>
</dbReference>
<dbReference type="Pfam" id="PF07977">
    <property type="entry name" value="FabA"/>
    <property type="match status" value="1"/>
</dbReference>
<dbReference type="SUPFAM" id="SSF54637">
    <property type="entry name" value="Thioesterase/thiol ester dehydrase-isomerase"/>
    <property type="match status" value="1"/>
</dbReference>
<sequence>MNDAATVLGTADLQEILRLLPHRYPFLLVDRIIEIDDDNSAIGIKNVTANEPHFTGHFPEKPIMPGVLLIEGMAQTAGAICARKTGIGSNLVYFMTIDNARFRKPVVPGDRVEFHVTKQKQRGNIWKFHCDAKVDGQLVAEADIGAMIVSKEDA</sequence>
<gene>
    <name evidence="1" type="primary">fabZ</name>
    <name type="ordered locus">NGR_c13430</name>
</gene>
<accession>C3MBR1</accession>
<comment type="function">
    <text evidence="1">Involved in unsaturated fatty acids biosynthesis. Catalyzes the dehydration of short chain beta-hydroxyacyl-ACPs and long chain saturated and unsaturated beta-hydroxyacyl-ACPs.</text>
</comment>
<comment type="catalytic activity">
    <reaction evidence="1">
        <text>a (3R)-hydroxyacyl-[ACP] = a (2E)-enoyl-[ACP] + H2O</text>
        <dbReference type="Rhea" id="RHEA:13097"/>
        <dbReference type="Rhea" id="RHEA-COMP:9925"/>
        <dbReference type="Rhea" id="RHEA-COMP:9945"/>
        <dbReference type="ChEBI" id="CHEBI:15377"/>
        <dbReference type="ChEBI" id="CHEBI:78784"/>
        <dbReference type="ChEBI" id="CHEBI:78827"/>
        <dbReference type="EC" id="4.2.1.59"/>
    </reaction>
</comment>
<comment type="subcellular location">
    <subcellularLocation>
        <location evidence="1">Cytoplasm</location>
    </subcellularLocation>
</comment>
<comment type="similarity">
    <text evidence="1">Belongs to the thioester dehydratase family. FabZ subfamily.</text>
</comment>
<reference key="1">
    <citation type="journal article" date="2009" name="Appl. Environ. Microbiol.">
        <title>Rhizobium sp. strain NGR234 possesses a remarkable number of secretion systems.</title>
        <authorList>
            <person name="Schmeisser C."/>
            <person name="Liesegang H."/>
            <person name="Krysciak D."/>
            <person name="Bakkou N."/>
            <person name="Le Quere A."/>
            <person name="Wollherr A."/>
            <person name="Heinemeyer I."/>
            <person name="Morgenstern B."/>
            <person name="Pommerening-Roeser A."/>
            <person name="Flores M."/>
            <person name="Palacios R."/>
            <person name="Brenner S."/>
            <person name="Gottschalk G."/>
            <person name="Schmitz R.A."/>
            <person name="Broughton W.J."/>
            <person name="Perret X."/>
            <person name="Strittmatter A.W."/>
            <person name="Streit W.R."/>
        </authorList>
    </citation>
    <scope>NUCLEOTIDE SEQUENCE [LARGE SCALE GENOMIC DNA]</scope>
    <source>
        <strain>NBRC 101917 / NGR234</strain>
    </source>
</reference>
<organism>
    <name type="scientific">Sinorhizobium fredii (strain NBRC 101917 / NGR234)</name>
    <dbReference type="NCBI Taxonomy" id="394"/>
    <lineage>
        <taxon>Bacteria</taxon>
        <taxon>Pseudomonadati</taxon>
        <taxon>Pseudomonadota</taxon>
        <taxon>Alphaproteobacteria</taxon>
        <taxon>Hyphomicrobiales</taxon>
        <taxon>Rhizobiaceae</taxon>
        <taxon>Sinorhizobium/Ensifer group</taxon>
        <taxon>Sinorhizobium</taxon>
    </lineage>
</organism>
<keyword id="KW-0963">Cytoplasm</keyword>
<keyword id="KW-0441">Lipid A biosynthesis</keyword>
<keyword id="KW-0444">Lipid biosynthesis</keyword>
<keyword id="KW-0443">Lipid metabolism</keyword>
<keyword id="KW-0456">Lyase</keyword>
<keyword id="KW-1185">Reference proteome</keyword>
<protein>
    <recommendedName>
        <fullName evidence="1">3-hydroxyacyl-[acyl-carrier-protein] dehydratase FabZ</fullName>
        <ecNumber evidence="1">4.2.1.59</ecNumber>
    </recommendedName>
    <alternativeName>
        <fullName evidence="1">(3R)-hydroxymyristoyl-[acyl-carrier-protein] dehydratase</fullName>
        <shortName evidence="1">(3R)-hydroxymyristoyl-ACP dehydrase</shortName>
    </alternativeName>
    <alternativeName>
        <fullName evidence="1">Beta-hydroxyacyl-ACP dehydratase</fullName>
    </alternativeName>
</protein>